<gene>
    <name evidence="10 13" type="primary">Mettl3</name>
    <name evidence="11 12" type="synonym">Ime4</name>
    <name evidence="13" type="ORF">CG5933</name>
</gene>
<name>MTA70_DROME</name>
<comment type="function">
    <text evidence="1 4 5 6 7">Catalytic component of the WMM complex, a complex that mediates N6-methyladenosine (m6A) methylation of mRNAs, a modification that plays a role in the efficiency of mRNA splicing and is required for sex determination (PubMed:27919077, PubMed:27919081, PubMed:28675155). In the heterodimer formed with Mettl14, constitutes the catalytic core (By similarity). Required for sex determination and dosage compensation via Sxl alternative splicing: m6A methylation acts as a key regulator of Sxl pre-mRNA and promotes female-specific alternative splicing of Sxl, which determines female physiognomy (PubMed:27919077, PubMed:27919081, PubMed:28675155). M6A methylation is also required for neuronal functions (PubMed:27919077). During oogenesis, required for egg chamber development probably as part of the N/Notch signaling (PubMed:21873203).</text>
</comment>
<comment type="catalytic activity">
    <reaction evidence="1">
        <text>an adenosine in mRNA + S-adenosyl-L-methionine = an N(6)-methyladenosine in mRNA + S-adenosyl-L-homocysteine + H(+)</text>
        <dbReference type="Rhea" id="RHEA:55584"/>
        <dbReference type="Rhea" id="RHEA-COMP:12414"/>
        <dbReference type="Rhea" id="RHEA-COMP:12417"/>
        <dbReference type="ChEBI" id="CHEBI:15378"/>
        <dbReference type="ChEBI" id="CHEBI:57856"/>
        <dbReference type="ChEBI" id="CHEBI:59789"/>
        <dbReference type="ChEBI" id="CHEBI:74411"/>
        <dbReference type="ChEBI" id="CHEBI:74449"/>
        <dbReference type="EC" id="2.1.1.348"/>
    </reaction>
</comment>
<comment type="subunit">
    <text evidence="7 8 9">Component of the WMM complex, a N6-methyltransferase complex composed of a catalytic subcomplex, named MAC, and of an associated subcomplex, named MACOM (PubMed:28675155, PubMed:29535189, PubMed:29555755). The MAC subcomplex is composed of Ime4/Mettl3 and Mettl14 (PubMed:28675155, PubMed:29535189, PubMed:29555755). The MACOM subcomplex is composed of fl(2)d, Flacc/Xio, Hakai, vir, and, in some cases of nito (PubMed:29535189, PubMed:29555755).</text>
</comment>
<comment type="subcellular location">
    <subcellularLocation>
        <location evidence="4 5 6 7">Nucleus</location>
    </subcellularLocation>
</comment>
<comment type="tissue specificity">
    <text evidence="4">Expressed in testes (PubMed:21873203). In the ovaries, detected in germaria, prefollicle, follicle and polar cells (at protein levels) (PubMed:21873203). Detected in the ooplasm and in the cells of the 16-cell cyst of early stages (at protein levels) (PubMed:21873203).</text>
</comment>
<comment type="developmental stage">
    <text evidence="5">Ubiquitously expressed in early embryonic stages with enrichment in the neuroectoderm at later stages.</text>
</comment>
<comment type="domain">
    <text evidence="1">Gate loop 1 and gate loop 2 regions are adjacent to the S-adenosyl-L-homocysteine-binding site and display large conformational changes upon ligand-binding. They may play an important role in adenosine recognition. The interface loop contributes to the heterodimer interaction.</text>
</comment>
<comment type="disruption phenotype">
    <text evidence="4 5 6 7">Flies have a reduced lifespan and exhibit multiple behavioral defects: flight and locomotion are severely affected and they spend more time grooming (PubMed:27919077, PubMed:27919081, PubMed:28675155). They also display a mild held-out wing appearance resulting from failure to fold their wings together over the dorsal surface of the thorax and abdomen (PubMed:27919077, PubMed:28675155). RNAi-mediated knockdown results in semi lethality and reduced fertility due to the presence of compound egg chambers with supernumerary nurse cells in the ovaries (PubMed:21873203).</text>
</comment>
<comment type="similarity">
    <text evidence="2">Belongs to the MT-A70-like family.</text>
</comment>
<organism>
    <name type="scientific">Drosophila melanogaster</name>
    <name type="common">Fruit fly</name>
    <dbReference type="NCBI Taxonomy" id="7227"/>
    <lineage>
        <taxon>Eukaryota</taxon>
        <taxon>Metazoa</taxon>
        <taxon>Ecdysozoa</taxon>
        <taxon>Arthropoda</taxon>
        <taxon>Hexapoda</taxon>
        <taxon>Insecta</taxon>
        <taxon>Pterygota</taxon>
        <taxon>Neoptera</taxon>
        <taxon>Endopterygota</taxon>
        <taxon>Diptera</taxon>
        <taxon>Brachycera</taxon>
        <taxon>Muscomorpha</taxon>
        <taxon>Ephydroidea</taxon>
        <taxon>Drosophilidae</taxon>
        <taxon>Drosophila</taxon>
        <taxon>Sophophora</taxon>
    </lineage>
</organism>
<sequence length="608" mass="68101">MADAWDIKSLKTKRNTLREKLEKRKKERIEILSDIQEDLTNPKKELVEADLEVQKEVLQALSSCSLALPIVSTQVVEKIAGSSLEMVNFILGKLANQGAIVIRNVTIGTEAGCEIISVQPKELKEILEDTNDTCQQKEEEAKRKLEVDDVDQPQEKTIKLESTVARKESTSLDAPDDIMMLLSMPSTREKQSKQVGEEILELLTKPTAKERSVAEKFKSHGGAQVMEFCSHGTKVECLKAQQATAEMAAKKKQERRDEKELRPDVDAGENVTGKVPKTESAAEDGEIIAEVINNCEAESQESTDGSDTCSSETTDKCTKLHFKKIIQAHTDESLGDCSFLNTCFHMATCKYVHYEVDTLPHINTNKPTDVKTKLSLKRSVDSSCTLYPPQWIQCDLRFLDMTVLGKFAVVMADPPWDIHMELPYGTMSDDEMRALGVPALQDDGLIFLWVTGRAMELGRDCLKLWGYERVDELIWVKTNQLQRIIRTGRTGHWLNHGKEHCLVGMKGNPTNLNRGLDCDVIVAEVRATSHKPDEIYGIIERLSPGTRKIELFGRPHNIQPNWITLGNQLDGIRLVDPELITQFQKRYPDGNCMSPASANAASINGIQK</sequence>
<evidence type="ECO:0000250" key="1">
    <source>
        <dbReference type="UniProtKB" id="Q86U44"/>
    </source>
</evidence>
<evidence type="ECO:0000255" key="2">
    <source>
        <dbReference type="PROSITE-ProRule" id="PRU00489"/>
    </source>
</evidence>
<evidence type="ECO:0000256" key="3">
    <source>
        <dbReference type="SAM" id="MobiDB-lite"/>
    </source>
</evidence>
<evidence type="ECO:0000269" key="4">
    <source>
    </source>
</evidence>
<evidence type="ECO:0000269" key="5">
    <source>
    </source>
</evidence>
<evidence type="ECO:0000269" key="6">
    <source>
    </source>
</evidence>
<evidence type="ECO:0000269" key="7">
    <source>
    </source>
</evidence>
<evidence type="ECO:0000269" key="8">
    <source>
    </source>
</evidence>
<evidence type="ECO:0000269" key="9">
    <source>
    </source>
</evidence>
<evidence type="ECO:0000303" key="10">
    <source>
    </source>
</evidence>
<evidence type="ECO:0000303" key="11">
    <source>
    </source>
</evidence>
<evidence type="ECO:0000303" key="12">
    <source>
    </source>
</evidence>
<evidence type="ECO:0000312" key="13">
    <source>
        <dbReference type="FlyBase" id="FBgn0039139"/>
    </source>
</evidence>
<feature type="chain" id="PRO_0000207633" description="N(6)-adenosine-methyltransferase MT-A70-like protein">
    <location>
        <begin position="1"/>
        <end position="608"/>
    </location>
</feature>
<feature type="region of interest" description="Disordered" evidence="3">
    <location>
        <begin position="250"/>
        <end position="272"/>
    </location>
</feature>
<feature type="region of interest" description="Gate loop 1" evidence="1">
    <location>
        <begin position="414"/>
        <end position="428"/>
    </location>
</feature>
<feature type="region of interest" description="Interphase loop" evidence="1">
    <location>
        <begin position="480"/>
        <end position="497"/>
    </location>
</feature>
<feature type="region of interest" description="Positively charged region required for RNA-binding" evidence="1">
    <location>
        <begin position="483"/>
        <end position="496"/>
    </location>
</feature>
<feature type="region of interest" description="Gate loop 2" evidence="1">
    <location>
        <begin position="525"/>
        <end position="533"/>
    </location>
</feature>
<feature type="compositionally biased region" description="Basic and acidic residues" evidence="3">
    <location>
        <begin position="250"/>
        <end position="265"/>
    </location>
</feature>
<feature type="binding site" evidence="1">
    <location>
        <begin position="395"/>
        <end position="396"/>
    </location>
    <ligand>
        <name>S-adenosyl-L-methionine</name>
        <dbReference type="ChEBI" id="CHEBI:59789"/>
    </ligand>
</feature>
<feature type="binding site" evidence="1">
    <location>
        <position position="413"/>
    </location>
    <ligand>
        <name>S-adenosyl-L-methionine</name>
        <dbReference type="ChEBI" id="CHEBI:59789"/>
    </ligand>
</feature>
<feature type="binding site" evidence="1">
    <location>
        <position position="531"/>
    </location>
    <ligand>
        <name>S-adenosyl-L-methionine</name>
        <dbReference type="ChEBI" id="CHEBI:59789"/>
    </ligand>
</feature>
<feature type="binding site" evidence="1">
    <location>
        <begin position="554"/>
        <end position="557"/>
    </location>
    <ligand>
        <name>S-adenosyl-L-methionine</name>
        <dbReference type="ChEBI" id="CHEBI:59789"/>
    </ligand>
</feature>
<feature type="binding site" evidence="1">
    <location>
        <begin position="567"/>
        <end position="568"/>
    </location>
    <ligand>
        <name>S-adenosyl-L-methionine</name>
        <dbReference type="ChEBI" id="CHEBI:59789"/>
    </ligand>
</feature>
<feature type="site" description="Interaction with Mettl14" evidence="1">
    <location>
        <position position="456"/>
    </location>
</feature>
<feature type="site" description="Interaction with Mettl14" evidence="1">
    <location>
        <position position="459"/>
    </location>
</feature>
<feature type="mutagenesis site" description="Severe lethality; when associated with A-416." evidence="4">
    <original>D</original>
    <variation>A</variation>
    <location>
        <position position="413"/>
    </location>
</feature>
<feature type="mutagenesis site" description="Severe lethality; when associated with A-413." evidence="4">
    <original>W</original>
    <variation>A</variation>
    <location>
        <position position="416"/>
    </location>
</feature>
<keyword id="KW-0221">Differentiation</keyword>
<keyword id="KW-0489">Methyltransferase</keyword>
<keyword id="KW-0507">mRNA processing</keyword>
<keyword id="KW-0508">mRNA splicing</keyword>
<keyword id="KW-0539">Nucleus</keyword>
<keyword id="KW-1185">Reference proteome</keyword>
<keyword id="KW-0694">RNA-binding</keyword>
<keyword id="KW-0949">S-adenosyl-L-methionine</keyword>
<keyword id="KW-0726">Sexual differentiation</keyword>
<keyword id="KW-0808">Transferase</keyword>
<protein>
    <recommendedName>
        <fullName>N(6)-adenosine-methyltransferase MT-A70-like protein</fullName>
        <ecNumber evidence="1">2.1.1.348</ecNumber>
    </recommendedName>
    <alternativeName>
        <fullName evidence="11 12">Inducer of meiosis 4</fullName>
    </alternativeName>
    <alternativeName>
        <fullName evidence="13">Methyltransferase-like 3</fullName>
    </alternativeName>
</protein>
<reference key="1">
    <citation type="journal article" date="2000" name="Science">
        <title>The genome sequence of Drosophila melanogaster.</title>
        <authorList>
            <person name="Adams M.D."/>
            <person name="Celniker S.E."/>
            <person name="Holt R.A."/>
            <person name="Evans C.A."/>
            <person name="Gocayne J.D."/>
            <person name="Amanatides P.G."/>
            <person name="Scherer S.E."/>
            <person name="Li P.W."/>
            <person name="Hoskins R.A."/>
            <person name="Galle R.F."/>
            <person name="George R.A."/>
            <person name="Lewis S.E."/>
            <person name="Richards S."/>
            <person name="Ashburner M."/>
            <person name="Henderson S.N."/>
            <person name="Sutton G.G."/>
            <person name="Wortman J.R."/>
            <person name="Yandell M.D."/>
            <person name="Zhang Q."/>
            <person name="Chen L.X."/>
            <person name="Brandon R.C."/>
            <person name="Rogers Y.-H.C."/>
            <person name="Blazej R.G."/>
            <person name="Champe M."/>
            <person name="Pfeiffer B.D."/>
            <person name="Wan K.H."/>
            <person name="Doyle C."/>
            <person name="Baxter E.G."/>
            <person name="Helt G."/>
            <person name="Nelson C.R."/>
            <person name="Miklos G.L.G."/>
            <person name="Abril J.F."/>
            <person name="Agbayani A."/>
            <person name="An H.-J."/>
            <person name="Andrews-Pfannkoch C."/>
            <person name="Baldwin D."/>
            <person name="Ballew R.M."/>
            <person name="Basu A."/>
            <person name="Baxendale J."/>
            <person name="Bayraktaroglu L."/>
            <person name="Beasley E.M."/>
            <person name="Beeson K.Y."/>
            <person name="Benos P.V."/>
            <person name="Berman B.P."/>
            <person name="Bhandari D."/>
            <person name="Bolshakov S."/>
            <person name="Borkova D."/>
            <person name="Botchan M.R."/>
            <person name="Bouck J."/>
            <person name="Brokstein P."/>
            <person name="Brottier P."/>
            <person name="Burtis K.C."/>
            <person name="Busam D.A."/>
            <person name="Butler H."/>
            <person name="Cadieu E."/>
            <person name="Center A."/>
            <person name="Chandra I."/>
            <person name="Cherry J.M."/>
            <person name="Cawley S."/>
            <person name="Dahlke C."/>
            <person name="Davenport L.B."/>
            <person name="Davies P."/>
            <person name="de Pablos B."/>
            <person name="Delcher A."/>
            <person name="Deng Z."/>
            <person name="Mays A.D."/>
            <person name="Dew I."/>
            <person name="Dietz S.M."/>
            <person name="Dodson K."/>
            <person name="Doup L.E."/>
            <person name="Downes M."/>
            <person name="Dugan-Rocha S."/>
            <person name="Dunkov B.C."/>
            <person name="Dunn P."/>
            <person name="Durbin K.J."/>
            <person name="Evangelista C.C."/>
            <person name="Ferraz C."/>
            <person name="Ferriera S."/>
            <person name="Fleischmann W."/>
            <person name="Fosler C."/>
            <person name="Gabrielian A.E."/>
            <person name="Garg N.S."/>
            <person name="Gelbart W.M."/>
            <person name="Glasser K."/>
            <person name="Glodek A."/>
            <person name="Gong F."/>
            <person name="Gorrell J.H."/>
            <person name="Gu Z."/>
            <person name="Guan P."/>
            <person name="Harris M."/>
            <person name="Harris N.L."/>
            <person name="Harvey D.A."/>
            <person name="Heiman T.J."/>
            <person name="Hernandez J.R."/>
            <person name="Houck J."/>
            <person name="Hostin D."/>
            <person name="Houston K.A."/>
            <person name="Howland T.J."/>
            <person name="Wei M.-H."/>
            <person name="Ibegwam C."/>
            <person name="Jalali M."/>
            <person name="Kalush F."/>
            <person name="Karpen G.H."/>
            <person name="Ke Z."/>
            <person name="Kennison J.A."/>
            <person name="Ketchum K.A."/>
            <person name="Kimmel B.E."/>
            <person name="Kodira C.D."/>
            <person name="Kraft C.L."/>
            <person name="Kravitz S."/>
            <person name="Kulp D."/>
            <person name="Lai Z."/>
            <person name="Lasko P."/>
            <person name="Lei Y."/>
            <person name="Levitsky A.A."/>
            <person name="Li J.H."/>
            <person name="Li Z."/>
            <person name="Liang Y."/>
            <person name="Lin X."/>
            <person name="Liu X."/>
            <person name="Mattei B."/>
            <person name="McIntosh T.C."/>
            <person name="McLeod M.P."/>
            <person name="McPherson D."/>
            <person name="Merkulov G."/>
            <person name="Milshina N.V."/>
            <person name="Mobarry C."/>
            <person name="Morris J."/>
            <person name="Moshrefi A."/>
            <person name="Mount S.M."/>
            <person name="Moy M."/>
            <person name="Murphy B."/>
            <person name="Murphy L."/>
            <person name="Muzny D.M."/>
            <person name="Nelson D.L."/>
            <person name="Nelson D.R."/>
            <person name="Nelson K.A."/>
            <person name="Nixon K."/>
            <person name="Nusskern D.R."/>
            <person name="Pacleb J.M."/>
            <person name="Palazzolo M."/>
            <person name="Pittman G.S."/>
            <person name="Pan S."/>
            <person name="Pollard J."/>
            <person name="Puri V."/>
            <person name="Reese M.G."/>
            <person name="Reinert K."/>
            <person name="Remington K."/>
            <person name="Saunders R.D.C."/>
            <person name="Scheeler F."/>
            <person name="Shen H."/>
            <person name="Shue B.C."/>
            <person name="Siden-Kiamos I."/>
            <person name="Simpson M."/>
            <person name="Skupski M.P."/>
            <person name="Smith T.J."/>
            <person name="Spier E."/>
            <person name="Spradling A.C."/>
            <person name="Stapleton M."/>
            <person name="Strong R."/>
            <person name="Sun E."/>
            <person name="Svirskas R."/>
            <person name="Tector C."/>
            <person name="Turner R."/>
            <person name="Venter E."/>
            <person name="Wang A.H."/>
            <person name="Wang X."/>
            <person name="Wang Z.-Y."/>
            <person name="Wassarman D.A."/>
            <person name="Weinstock G.M."/>
            <person name="Weissenbach J."/>
            <person name="Williams S.M."/>
            <person name="Woodage T."/>
            <person name="Worley K.C."/>
            <person name="Wu D."/>
            <person name="Yang S."/>
            <person name="Yao Q.A."/>
            <person name="Ye J."/>
            <person name="Yeh R.-F."/>
            <person name="Zaveri J.S."/>
            <person name="Zhan M."/>
            <person name="Zhang G."/>
            <person name="Zhao Q."/>
            <person name="Zheng L."/>
            <person name="Zheng X.H."/>
            <person name="Zhong F.N."/>
            <person name="Zhong W."/>
            <person name="Zhou X."/>
            <person name="Zhu S.C."/>
            <person name="Zhu X."/>
            <person name="Smith H.O."/>
            <person name="Gibbs R.A."/>
            <person name="Myers E.W."/>
            <person name="Rubin G.M."/>
            <person name="Venter J.C."/>
        </authorList>
    </citation>
    <scope>NUCLEOTIDE SEQUENCE [LARGE SCALE GENOMIC DNA]</scope>
    <source>
        <strain>Berkeley</strain>
    </source>
</reference>
<reference key="2">
    <citation type="journal article" date="2002" name="Genome Biol.">
        <title>Annotation of the Drosophila melanogaster euchromatic genome: a systematic review.</title>
        <authorList>
            <person name="Misra S."/>
            <person name="Crosby M.A."/>
            <person name="Mungall C.J."/>
            <person name="Matthews B.B."/>
            <person name="Campbell K.S."/>
            <person name="Hradecky P."/>
            <person name="Huang Y."/>
            <person name="Kaminker J.S."/>
            <person name="Millburn G.H."/>
            <person name="Prochnik S.E."/>
            <person name="Smith C.D."/>
            <person name="Tupy J.L."/>
            <person name="Whitfield E.J."/>
            <person name="Bayraktaroglu L."/>
            <person name="Berman B.P."/>
            <person name="Bettencourt B.R."/>
            <person name="Celniker S.E."/>
            <person name="de Grey A.D.N.J."/>
            <person name="Drysdale R.A."/>
            <person name="Harris N.L."/>
            <person name="Richter J."/>
            <person name="Russo S."/>
            <person name="Schroeder A.J."/>
            <person name="Shu S.Q."/>
            <person name="Stapleton M."/>
            <person name="Yamada C."/>
            <person name="Ashburner M."/>
            <person name="Gelbart W.M."/>
            <person name="Rubin G.M."/>
            <person name="Lewis S.E."/>
        </authorList>
    </citation>
    <scope>GENOME REANNOTATION</scope>
    <source>
        <strain>Berkeley</strain>
    </source>
</reference>
<reference key="3">
    <citation type="journal article" date="2002" name="Genome Biol.">
        <title>A Drosophila full-length cDNA resource.</title>
        <authorList>
            <person name="Stapleton M."/>
            <person name="Carlson J.W."/>
            <person name="Brokstein P."/>
            <person name="Yu C."/>
            <person name="Champe M."/>
            <person name="George R.A."/>
            <person name="Guarin H."/>
            <person name="Kronmiller B."/>
            <person name="Pacleb J.M."/>
            <person name="Park S."/>
            <person name="Wan K.H."/>
            <person name="Rubin G.M."/>
            <person name="Celniker S.E."/>
        </authorList>
    </citation>
    <scope>NUCLEOTIDE SEQUENCE [LARGE SCALE MRNA]</scope>
    <source>
        <strain>Berkeley</strain>
        <tissue>Testis</tissue>
    </source>
</reference>
<reference key="4">
    <citation type="journal article" date="2011" name="Proc. Natl. Acad. Sci. U.S.A.">
        <title>Drosophila Inducer of MEiosis 4 (IME4) is required for Notch signaling during oogenesis.</title>
        <authorList>
            <person name="Hongay C.F."/>
            <person name="Orr-Weaver T.L."/>
        </authorList>
    </citation>
    <scope>FUNCTION</scope>
    <scope>SUBCELLULAR LOCATION</scope>
    <scope>TISSUE SPECIFICITY</scope>
    <scope>DISRUPTION PHENOTYPE</scope>
    <scope>MUTAGENESIS OF ASP-413 AND TRP-416</scope>
</reference>
<reference key="5">
    <citation type="journal article" date="2016" name="Nature">
        <title>m(6)A modulates neuronal functions and sex determination in Drosophila.</title>
        <authorList>
            <person name="Lence T."/>
            <person name="Akhtar J."/>
            <person name="Bayer M."/>
            <person name="Schmid K."/>
            <person name="Spindler L."/>
            <person name="Ho C.H."/>
            <person name="Kreim N."/>
            <person name="Andrade-Navarro M.A."/>
            <person name="Poeck B."/>
            <person name="Helm M."/>
            <person name="Roignant J.Y."/>
        </authorList>
    </citation>
    <scope>FUNCTION</scope>
    <scope>SUBCELLULAR LOCATION</scope>
    <scope>DISRUPTION PHENOTYPE</scope>
    <scope>DEVELOPMENTAL STAGE</scope>
    <scope>IDENTIFICATION IN THE WMM COMPLEX</scope>
</reference>
<reference key="6">
    <citation type="journal article" date="2016" name="Nature">
        <title>m(6)A potentiates Sxl alternative pre-mRNA splicing for robust Drosophila sex determination.</title>
        <authorList>
            <person name="Haussmann I.U."/>
            <person name="Bodi Z."/>
            <person name="Sanchez-Moran E."/>
            <person name="Mongan N.P."/>
            <person name="Archer N."/>
            <person name="Fray R.G."/>
            <person name="Soller M."/>
        </authorList>
    </citation>
    <scope>FUNCTION</scope>
    <scope>SUBCELLULAR LOCATION</scope>
    <scope>DISRUPTION PHENOTYPE</scope>
</reference>
<reference key="7">
    <citation type="journal article" date="2018" name="Genes Dev.">
        <title>Zc3h13/Flacc is required for adenosine methylation by bridging the mRNA-binding factor Rbm15/Spenito to the m6A machinery component Wtap/Fl(2)d.</title>
        <authorList>
            <person name="Knuckles P."/>
            <person name="Lence T."/>
            <person name="Haussmann I.U."/>
            <person name="Jacob D."/>
            <person name="Kreim N."/>
            <person name="Carl S.H."/>
            <person name="Masiello I."/>
            <person name="Hares T."/>
            <person name="Villasenor R."/>
            <person name="Hess D."/>
            <person name="Andrade-Navarro M.A."/>
            <person name="Biggiogera M."/>
            <person name="Helm M."/>
            <person name="Soller M."/>
            <person name="Buehler M."/>
            <person name="Roignant J.Y."/>
        </authorList>
    </citation>
    <scope>IDENTIFICATION IN THE WMM COMPLEX</scope>
</reference>
<reference key="8">
    <citation type="journal article" date="2017" name="Nat. Commun.">
        <title>The m6A pathway facilitates sex determination in Drosophila.</title>
        <authorList>
            <person name="Kan L."/>
            <person name="Grozhik A.V."/>
            <person name="Vedanayagam J."/>
            <person name="Patil D.P."/>
            <person name="Pang N."/>
            <person name="Lim K.S."/>
            <person name="Huang Y.C."/>
            <person name="Joseph B."/>
            <person name="Lin C.J."/>
            <person name="Despic V."/>
            <person name="Guo J."/>
            <person name="Yan D."/>
            <person name="Kondo S."/>
            <person name="Deng W.M."/>
            <person name="Dedon P.C."/>
            <person name="Jaffrey S.R."/>
            <person name="Lai E.C."/>
        </authorList>
    </citation>
    <scope>FUNCTION</scope>
    <scope>IDENTIFICATION IN THE WMM COMPLEX</scope>
    <scope>SUBCELLULAR LOCATION</scope>
    <scope>DISRUPTION PHENOTYPE</scope>
</reference>
<reference key="9">
    <citation type="journal article" date="2018" name="Proc. Natl. Acad. Sci. U.S.A.">
        <title>Xio is a component of the Drosophila sex determination pathway and RNA N6-methyladenosine-methyladenosine methyltransferase complex.</title>
        <authorList>
            <person name="Guo J."/>
            <person name="Tang H.W."/>
            <person name="Li J."/>
            <person name="Perrimon N."/>
            <person name="Yan D."/>
        </authorList>
    </citation>
    <scope>IDENTIFICATION IN THE WMM COMPLEX</scope>
</reference>
<dbReference type="EC" id="2.1.1.348" evidence="1"/>
<dbReference type="EMBL" id="AE014297">
    <property type="protein sequence ID" value="AAF56221.1"/>
    <property type="molecule type" value="Genomic_DNA"/>
</dbReference>
<dbReference type="EMBL" id="AY113286">
    <property type="protein sequence ID" value="AAM29291.1"/>
    <property type="molecule type" value="mRNA"/>
</dbReference>
<dbReference type="RefSeq" id="NP_651204.1">
    <property type="nucleotide sequence ID" value="NM_142947.4"/>
</dbReference>
<dbReference type="SMR" id="Q9VCE6"/>
<dbReference type="BioGRID" id="67779">
    <property type="interactions" value="24"/>
</dbReference>
<dbReference type="ComplexPortal" id="CPX-2344">
    <property type="entry name" value="N6-methyladenosine methyltransferase complex"/>
</dbReference>
<dbReference type="DIP" id="DIP-17384N"/>
<dbReference type="FunCoup" id="Q9VCE6">
    <property type="interactions" value="1417"/>
</dbReference>
<dbReference type="IntAct" id="Q9VCE6">
    <property type="interactions" value="7"/>
</dbReference>
<dbReference type="STRING" id="7227.FBpp0083917"/>
<dbReference type="PaxDb" id="7227-FBpp0083917"/>
<dbReference type="DNASU" id="42844"/>
<dbReference type="EnsemblMetazoa" id="FBtr0084532">
    <property type="protein sequence ID" value="FBpp0083917"/>
    <property type="gene ID" value="FBgn0039139"/>
</dbReference>
<dbReference type="GeneID" id="42844"/>
<dbReference type="KEGG" id="dme:Dmel_CG5933"/>
<dbReference type="AGR" id="FB:FBgn0039139"/>
<dbReference type="CTD" id="56339"/>
<dbReference type="FlyBase" id="FBgn0039139">
    <property type="gene designation" value="Mettl3"/>
</dbReference>
<dbReference type="VEuPathDB" id="VectorBase:FBgn0039139"/>
<dbReference type="eggNOG" id="KOG2098">
    <property type="taxonomic scope" value="Eukaryota"/>
</dbReference>
<dbReference type="GeneTree" id="ENSGT00550000075058"/>
<dbReference type="HOGENOM" id="CLU_018702_4_0_1"/>
<dbReference type="InParanoid" id="Q9VCE6"/>
<dbReference type="OMA" id="APNDIMM"/>
<dbReference type="OrthoDB" id="10262526at2759"/>
<dbReference type="PhylomeDB" id="Q9VCE6"/>
<dbReference type="Reactome" id="R-DME-72203">
    <property type="pathway name" value="Processing of Capped Intron-Containing Pre-mRNA"/>
</dbReference>
<dbReference type="BioGRID-ORCS" id="42844">
    <property type="hits" value="0 hits in 1 CRISPR screen"/>
</dbReference>
<dbReference type="GenomeRNAi" id="42844"/>
<dbReference type="PRO" id="PR:Q9VCE6"/>
<dbReference type="Proteomes" id="UP000000803">
    <property type="component" value="Chromosome 3R"/>
</dbReference>
<dbReference type="Bgee" id="FBgn0039139">
    <property type="expression patterns" value="Expressed in indirect flight muscle cell (Drosophila) in body wall and 62 other cell types or tissues"/>
</dbReference>
<dbReference type="GO" id="GO:0005634">
    <property type="term" value="C:nucleus"/>
    <property type="evidence" value="ECO:0000314"/>
    <property type="project" value="FlyBase"/>
</dbReference>
<dbReference type="GO" id="GO:0036396">
    <property type="term" value="C:RNA N6-methyladenosine methyltransferase complex"/>
    <property type="evidence" value="ECO:0000314"/>
    <property type="project" value="UniProtKB"/>
</dbReference>
<dbReference type="GO" id="GO:0001734">
    <property type="term" value="F:mRNA m(6)A methyltransferase activity"/>
    <property type="evidence" value="ECO:0000315"/>
    <property type="project" value="FlyBase"/>
</dbReference>
<dbReference type="GO" id="GO:0003723">
    <property type="term" value="F:RNA binding"/>
    <property type="evidence" value="ECO:0007669"/>
    <property type="project" value="UniProtKB-KW"/>
</dbReference>
<dbReference type="GO" id="GO:0030237">
    <property type="term" value="P:female sex determination"/>
    <property type="evidence" value="ECO:0000315"/>
    <property type="project" value="FlyBase"/>
</dbReference>
<dbReference type="GO" id="GO:0030707">
    <property type="term" value="P:follicle cell of egg chamber development"/>
    <property type="evidence" value="ECO:0000315"/>
    <property type="project" value="FlyBase"/>
</dbReference>
<dbReference type="GO" id="GO:0030708">
    <property type="term" value="P:germarium-derived female germ-line cyst encapsulation"/>
    <property type="evidence" value="ECO:0000315"/>
    <property type="project" value="FlyBase"/>
</dbReference>
<dbReference type="GO" id="GO:0016556">
    <property type="term" value="P:mRNA modification"/>
    <property type="evidence" value="ECO:0000318"/>
    <property type="project" value="GO_Central"/>
</dbReference>
<dbReference type="GO" id="GO:0006397">
    <property type="term" value="P:mRNA processing"/>
    <property type="evidence" value="ECO:0007669"/>
    <property type="project" value="UniProtKB-KW"/>
</dbReference>
<dbReference type="GO" id="GO:0000381">
    <property type="term" value="P:regulation of alternative mRNA splicing, via spliceosome"/>
    <property type="evidence" value="ECO:0000314"/>
    <property type="project" value="FlyBase"/>
</dbReference>
<dbReference type="GO" id="GO:0001510">
    <property type="term" value="P:RNA methylation"/>
    <property type="evidence" value="ECO:0000250"/>
    <property type="project" value="UniProtKB"/>
</dbReference>
<dbReference type="GO" id="GO:0008380">
    <property type="term" value="P:RNA splicing"/>
    <property type="evidence" value="ECO:0007669"/>
    <property type="project" value="UniProtKB-KW"/>
</dbReference>
<dbReference type="GO" id="GO:0007530">
    <property type="term" value="P:sex determination"/>
    <property type="evidence" value="ECO:0000315"/>
    <property type="project" value="FlyBase"/>
</dbReference>
<dbReference type="GO" id="GO:0007548">
    <property type="term" value="P:sex differentiation"/>
    <property type="evidence" value="ECO:0007669"/>
    <property type="project" value="UniProtKB-KW"/>
</dbReference>
<dbReference type="GO" id="GO:0007549">
    <property type="term" value="P:sex-chromosome dosage compensation"/>
    <property type="evidence" value="ECO:0000315"/>
    <property type="project" value="FlyBase"/>
</dbReference>
<dbReference type="InterPro" id="IPR025848">
    <property type="entry name" value="MT-A70"/>
</dbReference>
<dbReference type="InterPro" id="IPR007757">
    <property type="entry name" value="MT-A70-like"/>
</dbReference>
<dbReference type="InterPro" id="IPR029063">
    <property type="entry name" value="SAM-dependent_MTases_sf"/>
</dbReference>
<dbReference type="PANTHER" id="PTHR12829">
    <property type="entry name" value="N6-ADENOSINE-METHYLTRANSFERASE"/>
    <property type="match status" value="1"/>
</dbReference>
<dbReference type="PANTHER" id="PTHR12829:SF7">
    <property type="entry name" value="N6-ADENOSINE-METHYLTRANSFERASE CATALYTIC SUBUNIT"/>
    <property type="match status" value="1"/>
</dbReference>
<dbReference type="Pfam" id="PF05063">
    <property type="entry name" value="MT-A70"/>
    <property type="match status" value="1"/>
</dbReference>
<dbReference type="SUPFAM" id="SSF53335">
    <property type="entry name" value="S-adenosyl-L-methionine-dependent methyltransferases"/>
    <property type="match status" value="1"/>
</dbReference>
<dbReference type="PROSITE" id="PS51143">
    <property type="entry name" value="MT_A70"/>
    <property type="match status" value="1"/>
</dbReference>
<dbReference type="PROSITE" id="PS51563">
    <property type="entry name" value="SAM_MTA70L_1"/>
    <property type="match status" value="1"/>
</dbReference>
<proteinExistence type="evidence at protein level"/>
<accession>Q9VCE6</accession>